<proteinExistence type="inferred from homology"/>
<evidence type="ECO:0000255" key="1">
    <source>
        <dbReference type="HAMAP-Rule" id="MF_00188"/>
    </source>
</evidence>
<gene>
    <name evidence="1" type="primary">htpX</name>
    <name type="ordered locus">ABBFA_000818</name>
</gene>
<name>HTPX_ACIB3</name>
<comment type="cofactor">
    <cofactor evidence="1">
        <name>Zn(2+)</name>
        <dbReference type="ChEBI" id="CHEBI:29105"/>
    </cofactor>
    <text evidence="1">Binds 1 zinc ion per subunit.</text>
</comment>
<comment type="subcellular location">
    <subcellularLocation>
        <location evidence="1">Cell inner membrane</location>
        <topology evidence="1">Multi-pass membrane protein</topology>
    </subcellularLocation>
</comment>
<comment type="similarity">
    <text evidence="1">Belongs to the peptidase M48B family.</text>
</comment>
<keyword id="KW-0997">Cell inner membrane</keyword>
<keyword id="KW-1003">Cell membrane</keyword>
<keyword id="KW-0378">Hydrolase</keyword>
<keyword id="KW-0472">Membrane</keyword>
<keyword id="KW-0479">Metal-binding</keyword>
<keyword id="KW-0482">Metalloprotease</keyword>
<keyword id="KW-0645">Protease</keyword>
<keyword id="KW-0812">Transmembrane</keyword>
<keyword id="KW-1133">Transmembrane helix</keyword>
<keyword id="KW-0862">Zinc</keyword>
<protein>
    <recommendedName>
        <fullName evidence="1">Protease HtpX</fullName>
        <ecNumber evidence="1">3.4.24.-</ecNumber>
    </recommendedName>
    <alternativeName>
        <fullName evidence="1">Heat shock protein HtpX</fullName>
    </alternativeName>
</protein>
<reference key="1">
    <citation type="journal article" date="2008" name="J. Bacteriol.">
        <title>Comparative genome sequence analysis of multidrug-resistant Acinetobacter baumannii.</title>
        <authorList>
            <person name="Adams M.D."/>
            <person name="Goglin K."/>
            <person name="Molyneaux N."/>
            <person name="Hujer K.M."/>
            <person name="Lavender H."/>
            <person name="Jamison J.J."/>
            <person name="MacDonald I.J."/>
            <person name="Martin K.M."/>
            <person name="Russo T."/>
            <person name="Campagnari A.A."/>
            <person name="Hujer A.M."/>
            <person name="Bonomo R.A."/>
            <person name="Gill S.R."/>
        </authorList>
    </citation>
    <scope>NUCLEOTIDE SEQUENCE [LARGE SCALE GENOMIC DNA]</scope>
    <source>
        <strain>AB307-0294</strain>
    </source>
</reference>
<dbReference type="EC" id="3.4.24.-" evidence="1"/>
<dbReference type="EMBL" id="CP001172">
    <property type="protein sequence ID" value="ACJ56966.1"/>
    <property type="molecule type" value="Genomic_DNA"/>
</dbReference>
<dbReference type="RefSeq" id="WP_000984535.1">
    <property type="nucleotide sequence ID" value="NZ_CP001172.1"/>
</dbReference>
<dbReference type="SMR" id="B7GY42"/>
<dbReference type="MEROPS" id="M48.002"/>
<dbReference type="GeneID" id="92894933"/>
<dbReference type="HOGENOM" id="CLU_042266_1_0_6"/>
<dbReference type="Proteomes" id="UP000006924">
    <property type="component" value="Chromosome"/>
</dbReference>
<dbReference type="GO" id="GO:0005886">
    <property type="term" value="C:plasma membrane"/>
    <property type="evidence" value="ECO:0007669"/>
    <property type="project" value="UniProtKB-SubCell"/>
</dbReference>
<dbReference type="GO" id="GO:0004222">
    <property type="term" value="F:metalloendopeptidase activity"/>
    <property type="evidence" value="ECO:0007669"/>
    <property type="project" value="UniProtKB-UniRule"/>
</dbReference>
<dbReference type="GO" id="GO:0008270">
    <property type="term" value="F:zinc ion binding"/>
    <property type="evidence" value="ECO:0007669"/>
    <property type="project" value="UniProtKB-UniRule"/>
</dbReference>
<dbReference type="GO" id="GO:0006508">
    <property type="term" value="P:proteolysis"/>
    <property type="evidence" value="ECO:0007669"/>
    <property type="project" value="UniProtKB-KW"/>
</dbReference>
<dbReference type="CDD" id="cd07335">
    <property type="entry name" value="M48B_HtpX_like"/>
    <property type="match status" value="1"/>
</dbReference>
<dbReference type="Gene3D" id="3.30.2010.10">
    <property type="entry name" value="Metalloproteases ('zincins'), catalytic domain"/>
    <property type="match status" value="1"/>
</dbReference>
<dbReference type="HAMAP" id="MF_00188">
    <property type="entry name" value="Pept_M48_protease_HtpX"/>
    <property type="match status" value="1"/>
</dbReference>
<dbReference type="InterPro" id="IPR050083">
    <property type="entry name" value="HtpX_protease"/>
</dbReference>
<dbReference type="InterPro" id="IPR022919">
    <property type="entry name" value="Pept_M48_protease_HtpX"/>
</dbReference>
<dbReference type="InterPro" id="IPR001915">
    <property type="entry name" value="Peptidase_M48"/>
</dbReference>
<dbReference type="NCBIfam" id="NF003965">
    <property type="entry name" value="PRK05457.1"/>
    <property type="match status" value="1"/>
</dbReference>
<dbReference type="PANTHER" id="PTHR43221">
    <property type="entry name" value="PROTEASE HTPX"/>
    <property type="match status" value="1"/>
</dbReference>
<dbReference type="PANTHER" id="PTHR43221:SF1">
    <property type="entry name" value="PROTEASE HTPX"/>
    <property type="match status" value="1"/>
</dbReference>
<dbReference type="Pfam" id="PF01435">
    <property type="entry name" value="Peptidase_M48"/>
    <property type="match status" value="1"/>
</dbReference>
<organism>
    <name type="scientific">Acinetobacter baumannii (strain AB307-0294)</name>
    <dbReference type="NCBI Taxonomy" id="557600"/>
    <lineage>
        <taxon>Bacteria</taxon>
        <taxon>Pseudomonadati</taxon>
        <taxon>Pseudomonadota</taxon>
        <taxon>Gammaproteobacteria</taxon>
        <taxon>Moraxellales</taxon>
        <taxon>Moraxellaceae</taxon>
        <taxon>Acinetobacter</taxon>
        <taxon>Acinetobacter calcoaceticus/baumannii complex</taxon>
    </lineage>
</organism>
<sequence>MMRIGLFLLTNLAVLVVAGIILSLFGVGSYHGAGGLNLGNLLVICFVFGMVGSLVSLFMSKWMAKKTTGTELIDPNAPRNQAESWLLQTVAELSQRAGINMPEVGIFPSYQSNAFATGWNKNDALVAVSSGLLERMNKDELRAVLAHEIGHVANGDMVTLALIQGVVNAFVMFFARVVGDFIDRNVFGRQDNEAPGMGYFIITMVLDIVFGILASAIVMWFSRYREYRADEAGARLAGKQAMISALLRLQAETELPDQMPKEMKAFAIAEGKEQGFSLAALFQTHPTIEQRVAALHQLDCP</sequence>
<feature type="chain" id="PRO_1000192735" description="Protease HtpX">
    <location>
        <begin position="1"/>
        <end position="301"/>
    </location>
</feature>
<feature type="transmembrane region" description="Helical" evidence="1">
    <location>
        <begin position="4"/>
        <end position="24"/>
    </location>
</feature>
<feature type="transmembrane region" description="Helical" evidence="1">
    <location>
        <begin position="38"/>
        <end position="58"/>
    </location>
</feature>
<feature type="transmembrane region" description="Helical" evidence="1">
    <location>
        <begin position="155"/>
        <end position="175"/>
    </location>
</feature>
<feature type="transmembrane region" description="Helical" evidence="1">
    <location>
        <begin position="200"/>
        <end position="220"/>
    </location>
</feature>
<feature type="active site" evidence="1">
    <location>
        <position position="148"/>
    </location>
</feature>
<feature type="binding site" evidence="1">
    <location>
        <position position="147"/>
    </location>
    <ligand>
        <name>Zn(2+)</name>
        <dbReference type="ChEBI" id="CHEBI:29105"/>
        <note>catalytic</note>
    </ligand>
</feature>
<feature type="binding site" evidence="1">
    <location>
        <position position="151"/>
    </location>
    <ligand>
        <name>Zn(2+)</name>
        <dbReference type="ChEBI" id="CHEBI:29105"/>
        <note>catalytic</note>
    </ligand>
</feature>
<feature type="binding site" evidence="1">
    <location>
        <position position="226"/>
    </location>
    <ligand>
        <name>Zn(2+)</name>
        <dbReference type="ChEBI" id="CHEBI:29105"/>
        <note>catalytic</note>
    </ligand>
</feature>
<accession>B7GY42</accession>